<reference key="1">
    <citation type="journal article" date="2010" name="Genome Biol. Evol.">
        <title>Continuing evolution of Burkholderia mallei through genome reduction and large-scale rearrangements.</title>
        <authorList>
            <person name="Losada L."/>
            <person name="Ronning C.M."/>
            <person name="DeShazer D."/>
            <person name="Woods D."/>
            <person name="Fedorova N."/>
            <person name="Kim H.S."/>
            <person name="Shabalina S.A."/>
            <person name="Pearson T.R."/>
            <person name="Brinkac L."/>
            <person name="Tan P."/>
            <person name="Nandi T."/>
            <person name="Crabtree J."/>
            <person name="Badger J."/>
            <person name="Beckstrom-Sternberg S."/>
            <person name="Saqib M."/>
            <person name="Schutzer S.E."/>
            <person name="Keim P."/>
            <person name="Nierman W.C."/>
        </authorList>
    </citation>
    <scope>NUCLEOTIDE SEQUENCE [LARGE SCALE GENOMIC DNA]</scope>
    <source>
        <strain>668</strain>
    </source>
</reference>
<feature type="chain" id="PRO_0000347962" description="tRNA 5-methylaminomethyl-2-thiouridine biosynthesis bifunctional protein MnmC">
    <location>
        <begin position="1"/>
        <end position="657"/>
    </location>
</feature>
<feature type="region of interest" description="tRNA (mnm(5)s(2)U34)-methyltransferase">
    <location>
        <begin position="1"/>
        <end position="239"/>
    </location>
</feature>
<feature type="region of interest" description="FAD-dependent cmnm(5)s(2)U34 oxidoreductase">
    <location>
        <begin position="263"/>
        <end position="657"/>
    </location>
</feature>
<organism>
    <name type="scientific">Burkholderia pseudomallei (strain 668)</name>
    <dbReference type="NCBI Taxonomy" id="320373"/>
    <lineage>
        <taxon>Bacteria</taxon>
        <taxon>Pseudomonadati</taxon>
        <taxon>Pseudomonadota</taxon>
        <taxon>Betaproteobacteria</taxon>
        <taxon>Burkholderiales</taxon>
        <taxon>Burkholderiaceae</taxon>
        <taxon>Burkholderia</taxon>
        <taxon>pseudomallei group</taxon>
    </lineage>
</organism>
<evidence type="ECO:0000255" key="1">
    <source>
        <dbReference type="HAMAP-Rule" id="MF_01102"/>
    </source>
</evidence>
<evidence type="ECO:0000305" key="2"/>
<dbReference type="EC" id="2.1.1.61" evidence="1"/>
<dbReference type="EC" id="1.5.-.-" evidence="1"/>
<dbReference type="EMBL" id="CP000570">
    <property type="protein sequence ID" value="ABN84675.1"/>
    <property type="status" value="ALT_INIT"/>
    <property type="molecule type" value="Genomic_DNA"/>
</dbReference>
<dbReference type="RefSeq" id="WP_041278158.1">
    <property type="nucleotide sequence ID" value="NC_009074.1"/>
</dbReference>
<dbReference type="SMR" id="A3N3Y7"/>
<dbReference type="KEGG" id="bpd:BURPS668_0003"/>
<dbReference type="HOGENOM" id="CLU_022427_1_0_4"/>
<dbReference type="GO" id="GO:0005737">
    <property type="term" value="C:cytoplasm"/>
    <property type="evidence" value="ECO:0007669"/>
    <property type="project" value="UniProtKB-SubCell"/>
</dbReference>
<dbReference type="GO" id="GO:0050660">
    <property type="term" value="F:flavin adenine dinucleotide binding"/>
    <property type="evidence" value="ECO:0007669"/>
    <property type="project" value="UniProtKB-UniRule"/>
</dbReference>
<dbReference type="GO" id="GO:0016645">
    <property type="term" value="F:oxidoreductase activity, acting on the CH-NH group of donors"/>
    <property type="evidence" value="ECO:0007669"/>
    <property type="project" value="InterPro"/>
</dbReference>
<dbReference type="GO" id="GO:0004808">
    <property type="term" value="F:tRNA (5-methylaminomethyl-2-thiouridylate)(34)-methyltransferase activity"/>
    <property type="evidence" value="ECO:0007669"/>
    <property type="project" value="UniProtKB-EC"/>
</dbReference>
<dbReference type="GO" id="GO:0032259">
    <property type="term" value="P:methylation"/>
    <property type="evidence" value="ECO:0007669"/>
    <property type="project" value="UniProtKB-KW"/>
</dbReference>
<dbReference type="GO" id="GO:0002097">
    <property type="term" value="P:tRNA wobble base modification"/>
    <property type="evidence" value="ECO:0007669"/>
    <property type="project" value="UniProtKB-UniRule"/>
</dbReference>
<dbReference type="Gene3D" id="3.30.9.10">
    <property type="entry name" value="D-Amino Acid Oxidase, subunit A, domain 2"/>
    <property type="match status" value="1"/>
</dbReference>
<dbReference type="Gene3D" id="3.50.50.60">
    <property type="entry name" value="FAD/NAD(P)-binding domain"/>
    <property type="match status" value="1"/>
</dbReference>
<dbReference type="Gene3D" id="3.40.50.150">
    <property type="entry name" value="Vaccinia Virus protein VP39"/>
    <property type="match status" value="1"/>
</dbReference>
<dbReference type="HAMAP" id="MF_01102">
    <property type="entry name" value="MnmC"/>
    <property type="match status" value="1"/>
</dbReference>
<dbReference type="InterPro" id="IPR006076">
    <property type="entry name" value="FAD-dep_OxRdtase"/>
</dbReference>
<dbReference type="InterPro" id="IPR036188">
    <property type="entry name" value="FAD/NAD-bd_sf"/>
</dbReference>
<dbReference type="InterPro" id="IPR008471">
    <property type="entry name" value="MnmC-like_methylTransf"/>
</dbReference>
<dbReference type="InterPro" id="IPR029063">
    <property type="entry name" value="SAM-dependent_MTases_sf"/>
</dbReference>
<dbReference type="InterPro" id="IPR023032">
    <property type="entry name" value="tRNA_MAMT_biosynth_bifunc_MnmC"/>
</dbReference>
<dbReference type="InterPro" id="IPR047785">
    <property type="entry name" value="tRNA_MNMC2"/>
</dbReference>
<dbReference type="InterPro" id="IPR017610">
    <property type="entry name" value="tRNA_S-uridine_synth_MnmC_C"/>
</dbReference>
<dbReference type="NCBIfam" id="TIGR03197">
    <property type="entry name" value="MnmC_Cterm"/>
    <property type="match status" value="1"/>
</dbReference>
<dbReference type="NCBIfam" id="NF002481">
    <property type="entry name" value="PRK01747.1-2"/>
    <property type="match status" value="1"/>
</dbReference>
<dbReference type="NCBIfam" id="NF002483">
    <property type="entry name" value="PRK01747.1-4"/>
    <property type="match status" value="1"/>
</dbReference>
<dbReference type="NCBIfam" id="NF033855">
    <property type="entry name" value="tRNA_MNMC2"/>
    <property type="match status" value="1"/>
</dbReference>
<dbReference type="PANTHER" id="PTHR13847">
    <property type="entry name" value="SARCOSINE DEHYDROGENASE-RELATED"/>
    <property type="match status" value="1"/>
</dbReference>
<dbReference type="PANTHER" id="PTHR13847:SF283">
    <property type="entry name" value="TRNA 5-METHYLAMINOMETHYL-2-THIOURIDINE BIOSYNTHESIS BIFUNCTIONAL PROTEIN MNMC"/>
    <property type="match status" value="1"/>
</dbReference>
<dbReference type="Pfam" id="PF01266">
    <property type="entry name" value="DAO"/>
    <property type="match status" value="1"/>
</dbReference>
<dbReference type="Pfam" id="PF05430">
    <property type="entry name" value="Methyltransf_30"/>
    <property type="match status" value="1"/>
</dbReference>
<dbReference type="SUPFAM" id="SSF54373">
    <property type="entry name" value="FAD-linked reductases, C-terminal domain"/>
    <property type="match status" value="1"/>
</dbReference>
<dbReference type="SUPFAM" id="SSF51905">
    <property type="entry name" value="FAD/NAD(P)-binding domain"/>
    <property type="match status" value="1"/>
</dbReference>
<accession>A3N3Y7</accession>
<protein>
    <recommendedName>
        <fullName evidence="1">tRNA 5-methylaminomethyl-2-thiouridine biosynthesis bifunctional protein MnmC</fullName>
        <shortName evidence="1">tRNA mnm(5)s(2)U biosynthesis bifunctional protein</shortName>
    </recommendedName>
    <domain>
        <recommendedName>
            <fullName evidence="1">tRNA (mnm(5)s(2)U34)-methyltransferase</fullName>
            <ecNumber evidence="1">2.1.1.61</ecNumber>
        </recommendedName>
    </domain>
    <domain>
        <recommendedName>
            <fullName evidence="1">FAD-dependent cmnm(5)s(2)U34 oxidoreductase</fullName>
            <ecNumber evidence="1">1.5.-.-</ecNumber>
        </recommendedName>
    </domain>
</protein>
<proteinExistence type="inferred from homology"/>
<comment type="function">
    <text evidence="1">Catalyzes the last two steps in the biosynthesis of 5-methylaminomethyl-2-thiouridine (mnm(5)s(2)U) at the wobble position (U34) in tRNA. Catalyzes the FAD-dependent demodification of cmnm(5)s(2)U34 to nm(5)s(2)U34, followed by the transfer of a methyl group from S-adenosyl-L-methionine to nm(5)s(2)U34, to form mnm(5)s(2)U34.</text>
</comment>
<comment type="catalytic activity">
    <reaction evidence="1">
        <text>5-aminomethyl-2-thiouridine(34) in tRNA + S-adenosyl-L-methionine = 5-methylaminomethyl-2-thiouridine(34) in tRNA + S-adenosyl-L-homocysteine + H(+)</text>
        <dbReference type="Rhea" id="RHEA:19569"/>
        <dbReference type="Rhea" id="RHEA-COMP:10195"/>
        <dbReference type="Rhea" id="RHEA-COMP:10197"/>
        <dbReference type="ChEBI" id="CHEBI:15378"/>
        <dbReference type="ChEBI" id="CHEBI:57856"/>
        <dbReference type="ChEBI" id="CHEBI:59789"/>
        <dbReference type="ChEBI" id="CHEBI:74454"/>
        <dbReference type="ChEBI" id="CHEBI:74455"/>
        <dbReference type="EC" id="2.1.1.61"/>
    </reaction>
</comment>
<comment type="cofactor">
    <cofactor evidence="1">
        <name>FAD</name>
        <dbReference type="ChEBI" id="CHEBI:57692"/>
    </cofactor>
</comment>
<comment type="subcellular location">
    <subcellularLocation>
        <location evidence="1">Cytoplasm</location>
    </subcellularLocation>
</comment>
<comment type="similarity">
    <text evidence="1">In the N-terminal section; belongs to the methyltransferase superfamily. tRNA (mnm(5)s(2)U34)-methyltransferase family.</text>
</comment>
<comment type="similarity">
    <text evidence="1">In the C-terminal section; belongs to the DAO family.</text>
</comment>
<comment type="sequence caution" evidence="2">
    <conflict type="erroneous initiation">
        <sequence resource="EMBL-CDS" id="ABN84675"/>
    </conflict>
</comment>
<name>MNMC_BURP6</name>
<keyword id="KW-0963">Cytoplasm</keyword>
<keyword id="KW-0274">FAD</keyword>
<keyword id="KW-0285">Flavoprotein</keyword>
<keyword id="KW-0489">Methyltransferase</keyword>
<keyword id="KW-0511">Multifunctional enzyme</keyword>
<keyword id="KW-0560">Oxidoreductase</keyword>
<keyword id="KW-0949">S-adenosyl-L-methionine</keyword>
<keyword id="KW-0808">Transferase</keyword>
<keyword id="KW-0819">tRNA processing</keyword>
<sequence>MTDRIVPATLVFREDGTVVSPLYGDIYHSAAGALAQADHVFIRGNGLPERWRHERAFTIIETGFGTGCNFLATWAAWRADPSHCERLHFVSVEKHPFAREDLRRAAAHIVAYTTITPIAPLVDELANAWPALTPGVHRLEFDDGRVTLTLVFGDALDVLPNLALRAHAFYLDGFAPSKNADLWSPAIFKSLAKLADERATFATYTSSGAVKRALDEAGFAYRKVDGFAGKRAMLVGEFAPRWRVRRHEPPRAFSTDIRDAIVIGAGLAGCAVVERLAARGWHVTLIERRERIASEASGNPAGVFHPMIARDDNLAARLSRAGFLHALNRWRALERAGHAFSRSTHGLVQLATSDNEFERMRESIDALGVPAELASALSRDDARALLRTDVAHGGWLFAQGGSISPAALAAAQCAAAGDRLSRIVGVEIARLERGGDGRWRALDASGATIAQASVVVVANAADAARIAGLRHAPTQRVRGQLTLLPPGSAPAVPLPVIGDGYVVPLANGVTLTGATYEPDDTDATPREAGHRENLERLERLLPAFSANALDAGALAGRVGFRCVASDRLPLVGELGDEAAAAREAAALTGARLRDVPRATGLYGAFGYGSRGLVWAALGAELIAAQIDGEPWPLERELAEAIDPARFLVRALRHGRVA</sequence>
<gene>
    <name evidence="1" type="primary">mnmC</name>
    <name type="ordered locus">BURPS668_0003</name>
</gene>